<reference key="1">
    <citation type="journal article" date="2001" name="Mamm. Genome">
        <title>Source and component genes of a 6-200 Mb gene cluster in the house mouse.</title>
        <authorList>
            <person name="Weichenhan D."/>
            <person name="Kunze B."/>
            <person name="Winking H."/>
            <person name="Van Geel M."/>
            <person name="Osoegawa K."/>
            <person name="De Jong P.J."/>
            <person name="Traut W."/>
        </authorList>
    </citation>
    <scope>NUCLEOTIDE SEQUENCE [GENOMIC DNA / MRNA]</scope>
    <source>
        <tissue>Liver</tissue>
    </source>
</reference>
<comment type="subcellular location">
    <subcellularLocation>
        <location evidence="3 4">Nucleus</location>
    </subcellularLocation>
</comment>
<evidence type="ECO:0000250" key="1">
    <source>
        <dbReference type="UniProtKB" id="Q8BVK9"/>
    </source>
</evidence>
<evidence type="ECO:0000255" key="2"/>
<evidence type="ECO:0000255" key="3">
    <source>
        <dbReference type="PROSITE-ProRule" id="PRU00185"/>
    </source>
</evidence>
<evidence type="ECO:0000255" key="4">
    <source>
        <dbReference type="PROSITE-ProRule" id="PRU00747"/>
    </source>
</evidence>
<evidence type="ECO:0000256" key="5">
    <source>
        <dbReference type="SAM" id="MobiDB-lite"/>
    </source>
</evidence>
<evidence type="ECO:0000305" key="6"/>
<protein>
    <recommendedName>
        <fullName>Interferon-induced protein 75</fullName>
    </recommendedName>
</protein>
<organism>
    <name type="scientific">Mus caroli</name>
    <name type="common">Ryukyu mouse</name>
    <name type="synonym">Ricefield mouse</name>
    <dbReference type="NCBI Taxonomy" id="10089"/>
    <lineage>
        <taxon>Eukaryota</taxon>
        <taxon>Metazoa</taxon>
        <taxon>Chordata</taxon>
        <taxon>Craniata</taxon>
        <taxon>Vertebrata</taxon>
        <taxon>Euteleostomi</taxon>
        <taxon>Mammalia</taxon>
        <taxon>Eutheria</taxon>
        <taxon>Euarchontoglires</taxon>
        <taxon>Glires</taxon>
        <taxon>Rodentia</taxon>
        <taxon>Myomorpha</taxon>
        <taxon>Muroidea</taxon>
        <taxon>Muridae</taxon>
        <taxon>Murinae</taxon>
        <taxon>Mus</taxon>
        <taxon>Mus</taxon>
    </lineage>
</organism>
<proteinExistence type="evidence at transcript level"/>
<feature type="chain" id="PRO_0000247961" description="Interferon-induced protein 75">
    <location>
        <begin position="1"/>
        <end position="450"/>
    </location>
</feature>
<feature type="domain" description="HSR" evidence="4">
    <location>
        <begin position="1"/>
        <end position="108"/>
    </location>
</feature>
<feature type="domain" description="SAND" evidence="3">
    <location>
        <begin position="358"/>
        <end position="439"/>
    </location>
</feature>
<feature type="region of interest" description="Disordered" evidence="5">
    <location>
        <begin position="131"/>
        <end position="156"/>
    </location>
</feature>
<feature type="region of interest" description="Disordered" evidence="5">
    <location>
        <begin position="170"/>
        <end position="225"/>
    </location>
</feature>
<feature type="region of interest" description="Disordered" evidence="5">
    <location>
        <begin position="238"/>
        <end position="283"/>
    </location>
</feature>
<feature type="region of interest" description="Disordered" evidence="5">
    <location>
        <begin position="318"/>
        <end position="360"/>
    </location>
</feature>
<feature type="short sequence motif" description="Nuclear localization signal" evidence="2">
    <location>
        <begin position="251"/>
        <end position="266"/>
    </location>
</feature>
<feature type="compositionally biased region" description="Low complexity" evidence="5">
    <location>
        <begin position="143"/>
        <end position="154"/>
    </location>
</feature>
<feature type="compositionally biased region" description="Basic and acidic residues" evidence="5">
    <location>
        <begin position="197"/>
        <end position="212"/>
    </location>
</feature>
<feature type="compositionally biased region" description="Basic residues" evidence="5">
    <location>
        <begin position="245"/>
        <end position="267"/>
    </location>
</feature>
<feature type="compositionally biased region" description="Polar residues" evidence="5">
    <location>
        <begin position="343"/>
        <end position="353"/>
    </location>
</feature>
<feature type="modified residue" description="Phosphoserine" evidence="1">
    <location>
        <position position="175"/>
    </location>
</feature>
<feature type="modified residue" description="Phosphoserine" evidence="1">
    <location>
        <position position="177"/>
    </location>
</feature>
<feature type="modified residue" description="Phosphoserine" evidence="1">
    <location>
        <position position="226"/>
    </location>
</feature>
<feature type="sequence conflict" description="In Ref. 1; CAC47954." evidence="6" ref="1">
    <original>S</original>
    <variation>P</variation>
    <location>
        <position position="30"/>
    </location>
</feature>
<feature type="sequence conflict" description="In Ref. 1; CAC47954." evidence="6" ref="1">
    <original>T</original>
    <variation>A</variation>
    <location>
        <position position="36"/>
    </location>
</feature>
<feature type="sequence conflict" description="In Ref. 1; CAC47954." evidence="6" ref="1">
    <original>G</original>
    <variation>R</variation>
    <location>
        <position position="261"/>
    </location>
</feature>
<feature type="sequence conflict" description="In Ref. 1; CAC47954." evidence="6" ref="1">
    <original>G</original>
    <variation>E</variation>
    <location>
        <position position="354"/>
    </location>
</feature>
<name>IFI75_MUSCR</name>
<dbReference type="EMBL" id="AJ401361">
    <property type="protein sequence ID" value="CAC47954.1"/>
    <property type="molecule type" value="mRNA"/>
</dbReference>
<dbReference type="EMBL" id="AJ401363">
    <property type="protein sequence ID" value="CAC47964.1"/>
    <property type="molecule type" value="Genomic_DNA"/>
</dbReference>
<dbReference type="EMBL" id="AJ401364">
    <property type="protein sequence ID" value="CAC47964.1"/>
    <property type="status" value="JOINED"/>
    <property type="molecule type" value="Genomic_DNA"/>
</dbReference>
<dbReference type="EMBL" id="AJ401365">
    <property type="protein sequence ID" value="CAC47964.1"/>
    <property type="status" value="JOINED"/>
    <property type="molecule type" value="Genomic_DNA"/>
</dbReference>
<dbReference type="EMBL" id="AJ401367">
    <property type="protein sequence ID" value="CAC47964.1"/>
    <property type="status" value="JOINED"/>
    <property type="molecule type" value="Genomic_DNA"/>
</dbReference>
<dbReference type="EMBL" id="AJ401369">
    <property type="protein sequence ID" value="CAC47964.1"/>
    <property type="status" value="JOINED"/>
    <property type="molecule type" value="Genomic_DNA"/>
</dbReference>
<dbReference type="EMBL" id="AJ401371">
    <property type="protein sequence ID" value="CAC47964.1"/>
    <property type="status" value="JOINED"/>
    <property type="molecule type" value="Genomic_DNA"/>
</dbReference>
<dbReference type="EMBL" id="AJ401370">
    <property type="protein sequence ID" value="CAC47964.1"/>
    <property type="status" value="JOINED"/>
    <property type="molecule type" value="Genomic_DNA"/>
</dbReference>
<dbReference type="EMBL" id="AJ401368">
    <property type="protein sequence ID" value="CAC47964.1"/>
    <property type="status" value="JOINED"/>
    <property type="molecule type" value="Genomic_DNA"/>
</dbReference>
<dbReference type="EMBL" id="AJ401366">
    <property type="protein sequence ID" value="CAC47964.1"/>
    <property type="status" value="JOINED"/>
    <property type="molecule type" value="Genomic_DNA"/>
</dbReference>
<dbReference type="SMR" id="Q921C6"/>
<dbReference type="MGI" id="MGI:1890488">
    <property type="gene designation" value="Ifi75"/>
</dbReference>
<dbReference type="Proteomes" id="UP000515126">
    <property type="component" value="Unplaced"/>
</dbReference>
<dbReference type="GO" id="GO:0005634">
    <property type="term" value="C:nucleus"/>
    <property type="evidence" value="ECO:0007669"/>
    <property type="project" value="UniProtKB-SubCell"/>
</dbReference>
<dbReference type="GO" id="GO:0003677">
    <property type="term" value="F:DNA binding"/>
    <property type="evidence" value="ECO:0007669"/>
    <property type="project" value="InterPro"/>
</dbReference>
<dbReference type="GO" id="GO:0000981">
    <property type="term" value="F:DNA-binding transcription factor activity, RNA polymerase II-specific"/>
    <property type="evidence" value="ECO:0007669"/>
    <property type="project" value="TreeGrafter"/>
</dbReference>
<dbReference type="FunFam" id="3.10.390.10:FF:000004">
    <property type="entry name" value="Deformed epidermal autoregulatory factor 1"/>
    <property type="match status" value="1"/>
</dbReference>
<dbReference type="Gene3D" id="3.10.390.10">
    <property type="entry name" value="SAND domain-like"/>
    <property type="match status" value="1"/>
</dbReference>
<dbReference type="InterPro" id="IPR004865">
    <property type="entry name" value="HSR_dom"/>
</dbReference>
<dbReference type="InterPro" id="IPR010919">
    <property type="entry name" value="SAND-like_dom_sf"/>
</dbReference>
<dbReference type="InterPro" id="IPR000770">
    <property type="entry name" value="SAND_dom"/>
</dbReference>
<dbReference type="InterPro" id="IPR043563">
    <property type="entry name" value="Sp110/Sp140/Sp140L-like"/>
</dbReference>
<dbReference type="PANTHER" id="PTHR46386">
    <property type="entry name" value="NUCLEAR BODY PROTEIN SP140"/>
    <property type="match status" value="1"/>
</dbReference>
<dbReference type="PANTHER" id="PTHR46386:SF7">
    <property type="entry name" value="SP110 NUCLEAR BODY PROTEIN"/>
    <property type="match status" value="1"/>
</dbReference>
<dbReference type="Pfam" id="PF03172">
    <property type="entry name" value="HSR"/>
    <property type="match status" value="1"/>
</dbReference>
<dbReference type="Pfam" id="PF01342">
    <property type="entry name" value="SAND"/>
    <property type="match status" value="1"/>
</dbReference>
<dbReference type="SMART" id="SM00258">
    <property type="entry name" value="SAND"/>
    <property type="match status" value="1"/>
</dbReference>
<dbReference type="SUPFAM" id="SSF63763">
    <property type="entry name" value="SAND domain-like"/>
    <property type="match status" value="1"/>
</dbReference>
<dbReference type="PROSITE" id="PS51414">
    <property type="entry name" value="HSR"/>
    <property type="match status" value="1"/>
</dbReference>
<dbReference type="PROSITE" id="PS50864">
    <property type="entry name" value="SAND"/>
    <property type="match status" value="1"/>
</dbReference>
<keyword id="KW-0539">Nucleus</keyword>
<keyword id="KW-0597">Phosphoprotein</keyword>
<gene>
    <name type="primary">Ifi75</name>
</gene>
<sequence length="450" mass="50456">MFTLTKALEKALLQHFIYMKVNIAYAINKSFPFFETLRDNSFITERMYKESLEACQNLVPLSKVVHNILTSLEQTFQPSVLLTLFSQVNLREYPSLVAIFRSFRNVGYTYEEKNRPPPTLLEDLANPAEGCSLQTLLPPPRPQLSLPSHLSSAPRVCDPRATAQPITEILDEQPSPSPQAVPLPGCIQEGKTIPVSSRDHQRKDKEDSREMPHSPSGPESVVKDDSPAANDLEMAQEVLCTPANKKARRKKRLNWSNSKRGRQKKKPRQDEMMGVASPGHGVQEKIKAVVSRRTLWKDDSSTNVKEVTKILRARMRCAQTSNSQEISKEASKTSGRKRHGKRTSTAGKTTQVPGKTKNDAVDFLSPTFPVTCGKANGTLFQEKLKQGVSKKCIQNEAGDWLTVKEFLNEGRRATSKDWKKAIRCNGETLRQLEQKGLLFCTKSKPQKKGA</sequence>
<accession>Q921C6</accession>
<accession>Q91X10</accession>